<organism>
    <name type="scientific">Lysinibacillus sphaericus (strain C3-41)</name>
    <dbReference type="NCBI Taxonomy" id="444177"/>
    <lineage>
        <taxon>Bacteria</taxon>
        <taxon>Bacillati</taxon>
        <taxon>Bacillota</taxon>
        <taxon>Bacilli</taxon>
        <taxon>Bacillales</taxon>
        <taxon>Bacillaceae</taxon>
        <taxon>Lysinibacillus</taxon>
    </lineage>
</organism>
<protein>
    <recommendedName>
        <fullName evidence="1">Urease subunit beta</fullName>
        <ecNumber evidence="1">3.5.1.5</ecNumber>
    </recommendedName>
    <alternativeName>
        <fullName evidence="1">Urea amidohydrolase subunit beta</fullName>
    </alternativeName>
</protein>
<name>URE2_LYSSC</name>
<accession>B1HZE3</accession>
<evidence type="ECO:0000255" key="1">
    <source>
        <dbReference type="HAMAP-Rule" id="MF_01954"/>
    </source>
</evidence>
<gene>
    <name evidence="1" type="primary">ureB</name>
    <name type="ordered locus">Bsph_2700</name>
</gene>
<comment type="catalytic activity">
    <reaction evidence="1">
        <text>urea + 2 H2O + H(+) = hydrogencarbonate + 2 NH4(+)</text>
        <dbReference type="Rhea" id="RHEA:20557"/>
        <dbReference type="ChEBI" id="CHEBI:15377"/>
        <dbReference type="ChEBI" id="CHEBI:15378"/>
        <dbReference type="ChEBI" id="CHEBI:16199"/>
        <dbReference type="ChEBI" id="CHEBI:17544"/>
        <dbReference type="ChEBI" id="CHEBI:28938"/>
        <dbReference type="EC" id="3.5.1.5"/>
    </reaction>
</comment>
<comment type="pathway">
    <text evidence="1">Nitrogen metabolism; urea degradation; CO(2) and NH(3) from urea (urease route): step 1/1.</text>
</comment>
<comment type="subunit">
    <text evidence="1">Heterotrimer of UreA (gamma), UreB (beta) and UreC (alpha) subunits. Three heterotrimers associate to form the active enzyme.</text>
</comment>
<comment type="subcellular location">
    <subcellularLocation>
        <location evidence="1">Cytoplasm</location>
    </subcellularLocation>
</comment>
<comment type="similarity">
    <text evidence="1">Belongs to the urease beta subunit family.</text>
</comment>
<sequence>MIPGEIRPKKGVIEINVGRATKKVLVANTGDRPIQVGSHFHFIEVNRFLEFNREDAIGMHLNIPSGTAVRFEPGEEKEVELVEFGGKQHVFGLNKLTEGSTHHKDEILDKAIEGGFKGAEEK</sequence>
<proteinExistence type="inferred from homology"/>
<feature type="chain" id="PRO_1000188928" description="Urease subunit beta">
    <location>
        <begin position="1"/>
        <end position="122"/>
    </location>
</feature>
<dbReference type="EC" id="3.5.1.5" evidence="1"/>
<dbReference type="EMBL" id="CP000817">
    <property type="protein sequence ID" value="ACA40240.1"/>
    <property type="molecule type" value="Genomic_DNA"/>
</dbReference>
<dbReference type="RefSeq" id="WP_012294326.1">
    <property type="nucleotide sequence ID" value="NC_010382.1"/>
</dbReference>
<dbReference type="SMR" id="B1HZE3"/>
<dbReference type="EnsemblBacteria" id="ACA40240">
    <property type="protein sequence ID" value="ACA40240"/>
    <property type="gene ID" value="Bsph_2700"/>
</dbReference>
<dbReference type="KEGG" id="lsp:Bsph_2700"/>
<dbReference type="HOGENOM" id="CLU_129707_1_1_9"/>
<dbReference type="UniPathway" id="UPA00258">
    <property type="reaction ID" value="UER00370"/>
</dbReference>
<dbReference type="Proteomes" id="UP000002164">
    <property type="component" value="Chromosome"/>
</dbReference>
<dbReference type="GO" id="GO:0035550">
    <property type="term" value="C:urease complex"/>
    <property type="evidence" value="ECO:0007669"/>
    <property type="project" value="InterPro"/>
</dbReference>
<dbReference type="GO" id="GO:0009039">
    <property type="term" value="F:urease activity"/>
    <property type="evidence" value="ECO:0007669"/>
    <property type="project" value="UniProtKB-UniRule"/>
</dbReference>
<dbReference type="GO" id="GO:0043419">
    <property type="term" value="P:urea catabolic process"/>
    <property type="evidence" value="ECO:0007669"/>
    <property type="project" value="UniProtKB-UniRule"/>
</dbReference>
<dbReference type="CDD" id="cd00407">
    <property type="entry name" value="Urease_beta"/>
    <property type="match status" value="1"/>
</dbReference>
<dbReference type="FunFam" id="2.10.150.10:FF:000001">
    <property type="entry name" value="Urease subunit beta"/>
    <property type="match status" value="1"/>
</dbReference>
<dbReference type="Gene3D" id="2.10.150.10">
    <property type="entry name" value="Urease, beta subunit"/>
    <property type="match status" value="1"/>
</dbReference>
<dbReference type="HAMAP" id="MF_01954">
    <property type="entry name" value="Urease_beta"/>
    <property type="match status" value="1"/>
</dbReference>
<dbReference type="InterPro" id="IPR002019">
    <property type="entry name" value="Urease_beta-like"/>
</dbReference>
<dbReference type="InterPro" id="IPR036461">
    <property type="entry name" value="Urease_betasu_sf"/>
</dbReference>
<dbReference type="InterPro" id="IPR050069">
    <property type="entry name" value="Urease_subunit"/>
</dbReference>
<dbReference type="NCBIfam" id="NF009682">
    <property type="entry name" value="PRK13203.1"/>
    <property type="match status" value="1"/>
</dbReference>
<dbReference type="NCBIfam" id="TIGR00192">
    <property type="entry name" value="urease_beta"/>
    <property type="match status" value="1"/>
</dbReference>
<dbReference type="PANTHER" id="PTHR33569">
    <property type="entry name" value="UREASE"/>
    <property type="match status" value="1"/>
</dbReference>
<dbReference type="PANTHER" id="PTHR33569:SF1">
    <property type="entry name" value="UREASE"/>
    <property type="match status" value="1"/>
</dbReference>
<dbReference type="Pfam" id="PF00699">
    <property type="entry name" value="Urease_beta"/>
    <property type="match status" value="1"/>
</dbReference>
<dbReference type="SUPFAM" id="SSF51278">
    <property type="entry name" value="Urease, beta-subunit"/>
    <property type="match status" value="1"/>
</dbReference>
<reference key="1">
    <citation type="journal article" date="2008" name="J. Bacteriol.">
        <title>Complete genome sequence of the mosquitocidal bacterium Bacillus sphaericus C3-41 and comparison with those of closely related Bacillus species.</title>
        <authorList>
            <person name="Hu X."/>
            <person name="Fan W."/>
            <person name="Han B."/>
            <person name="Liu H."/>
            <person name="Zheng D."/>
            <person name="Li Q."/>
            <person name="Dong W."/>
            <person name="Yan J."/>
            <person name="Gao M."/>
            <person name="Berry C."/>
            <person name="Yuan Z."/>
        </authorList>
    </citation>
    <scope>NUCLEOTIDE SEQUENCE [LARGE SCALE GENOMIC DNA]</scope>
    <source>
        <strain>C3-41</strain>
    </source>
</reference>
<keyword id="KW-0963">Cytoplasm</keyword>
<keyword id="KW-0378">Hydrolase</keyword>